<organism>
    <name type="scientific">Mycobacterium tuberculosis (strain ATCC 25618 / H37Rv)</name>
    <dbReference type="NCBI Taxonomy" id="83332"/>
    <lineage>
        <taxon>Bacteria</taxon>
        <taxon>Bacillati</taxon>
        <taxon>Actinomycetota</taxon>
        <taxon>Actinomycetes</taxon>
        <taxon>Mycobacteriales</taxon>
        <taxon>Mycobacteriaceae</taxon>
        <taxon>Mycobacterium</taxon>
        <taxon>Mycobacterium tuberculosis complex</taxon>
    </lineage>
</organism>
<accession>P9WNX9</accession>
<accession>L0T5V9</accession>
<accession>P71989</accession>
<accession>Q7DA77</accession>
<proteinExistence type="evidence at protein level"/>
<keyword id="KW-0521">NADP</keyword>
<keyword id="KW-0560">Oxidoreductase</keyword>
<keyword id="KW-1185">Reference proteome</keyword>
<keyword id="KW-0816">Tricarboxylic acid cycle</keyword>
<protein>
    <recommendedName>
        <fullName>Succinate-semialdehyde dehydrogenase [NADP(+)] 1</fullName>
        <shortName>SSADH 1</shortName>
        <shortName>SSDH 1</shortName>
        <ecNumber>1.2.1.79</ecNumber>
    </recommendedName>
</protein>
<comment type="function">
    <text evidence="3">Catalyzes the NADP(+)-dependent oxidation of succinate semialdehyde to succinate. It is believed to be the main source of succinate semialdehyde dehydrogenase activity in Mycobacterium. NAD(+) can substitute for NADP(+), but enzymatic activity is three times reduced.</text>
</comment>
<comment type="catalytic activity">
    <reaction evidence="3">
        <text>succinate semialdehyde + NADP(+) + H2O = succinate + NADPH + 2 H(+)</text>
        <dbReference type="Rhea" id="RHEA:13213"/>
        <dbReference type="ChEBI" id="CHEBI:15377"/>
        <dbReference type="ChEBI" id="CHEBI:15378"/>
        <dbReference type="ChEBI" id="CHEBI:30031"/>
        <dbReference type="ChEBI" id="CHEBI:57706"/>
        <dbReference type="ChEBI" id="CHEBI:57783"/>
        <dbReference type="ChEBI" id="CHEBI:58349"/>
        <dbReference type="EC" id="1.2.1.79"/>
    </reaction>
</comment>
<comment type="similarity">
    <text evidence="4">Belongs to the aldehyde dehydrogenase family.</text>
</comment>
<comment type="sequence caution" evidence="4">
    <conflict type="erroneous initiation">
        <sequence resource="EMBL-CDS" id="CCP42962"/>
    </conflict>
    <text>Extended N-terminus.</text>
</comment>
<feature type="chain" id="PRO_0000310705" description="Succinate-semialdehyde dehydrogenase [NADP(+)] 1">
    <location>
        <begin position="1"/>
        <end position="457"/>
    </location>
</feature>
<feature type="active site" description="Proton acceptor" evidence="2">
    <location>
        <position position="231"/>
    </location>
</feature>
<feature type="active site" description="Nucleophile" evidence="2">
    <location>
        <position position="265"/>
    </location>
</feature>
<feature type="binding site" evidence="1">
    <location>
        <begin position="133"/>
        <end position="134"/>
    </location>
    <ligand>
        <name>NADP(+)</name>
        <dbReference type="ChEBI" id="CHEBI:58349"/>
    </ligand>
</feature>
<feature type="binding site" evidence="1">
    <location>
        <begin position="157"/>
        <end position="160"/>
    </location>
    <ligand>
        <name>NADP(+)</name>
        <dbReference type="ChEBI" id="CHEBI:58349"/>
    </ligand>
</feature>
<feature type="binding site" evidence="1">
    <location>
        <begin position="209"/>
        <end position="210"/>
    </location>
    <ligand>
        <name>NADP(+)</name>
        <dbReference type="ChEBI" id="CHEBI:58349"/>
    </ligand>
</feature>
<feature type="binding site" evidence="1">
    <location>
        <position position="232"/>
    </location>
    <ligand>
        <name>NADP(+)</name>
        <dbReference type="ChEBI" id="CHEBI:58349"/>
    </ligand>
</feature>
<feature type="binding site" evidence="1">
    <location>
        <position position="362"/>
    </location>
    <ligand>
        <name>NADP(+)</name>
        <dbReference type="ChEBI" id="CHEBI:58349"/>
    </ligand>
</feature>
<evidence type="ECO:0000250" key="1"/>
<evidence type="ECO:0000255" key="2">
    <source>
        <dbReference type="PROSITE-ProRule" id="PRU10008"/>
    </source>
</evidence>
<evidence type="ECO:0000269" key="3">
    <source>
    </source>
</evidence>
<evidence type="ECO:0000305" key="4"/>
<reference key="1">
    <citation type="journal article" date="1998" name="Nature">
        <title>Deciphering the biology of Mycobacterium tuberculosis from the complete genome sequence.</title>
        <authorList>
            <person name="Cole S.T."/>
            <person name="Brosch R."/>
            <person name="Parkhill J."/>
            <person name="Garnier T."/>
            <person name="Churcher C.M."/>
            <person name="Harris D.E."/>
            <person name="Gordon S.V."/>
            <person name="Eiglmeier K."/>
            <person name="Gas S."/>
            <person name="Barry C.E. III"/>
            <person name="Tekaia F."/>
            <person name="Badcock K."/>
            <person name="Basham D."/>
            <person name="Brown D."/>
            <person name="Chillingworth T."/>
            <person name="Connor R."/>
            <person name="Davies R.M."/>
            <person name="Devlin K."/>
            <person name="Feltwell T."/>
            <person name="Gentles S."/>
            <person name="Hamlin N."/>
            <person name="Holroyd S."/>
            <person name="Hornsby T."/>
            <person name="Jagels K."/>
            <person name="Krogh A."/>
            <person name="McLean J."/>
            <person name="Moule S."/>
            <person name="Murphy L.D."/>
            <person name="Oliver S."/>
            <person name="Osborne J."/>
            <person name="Quail M.A."/>
            <person name="Rajandream M.A."/>
            <person name="Rogers J."/>
            <person name="Rutter S."/>
            <person name="Seeger K."/>
            <person name="Skelton S."/>
            <person name="Squares S."/>
            <person name="Squares R."/>
            <person name="Sulston J.E."/>
            <person name="Taylor K."/>
            <person name="Whitehead S."/>
            <person name="Barrell B.G."/>
        </authorList>
    </citation>
    <scope>NUCLEOTIDE SEQUENCE [LARGE SCALE GENOMIC DNA]</scope>
    <source>
        <strain>ATCC 25618 / H37Rv</strain>
    </source>
</reference>
<reference key="2">
    <citation type="journal article" date="2005" name="Proc. Natl. Acad. Sci. U.S.A.">
        <title>Variant tricarboxylic acid cycle in Mycobacterium tuberculosis: identification of alpha-ketoglutarate decarboxylase.</title>
        <authorList>
            <person name="Tian J."/>
            <person name="Bryk R."/>
            <person name="Itoh M."/>
            <person name="Suematsu M."/>
            <person name="Nathan C."/>
        </authorList>
    </citation>
    <scope>FUNCTION</scope>
    <scope>CATALYTIC ACTIVITY</scope>
    <scope>ROLE IN TRICARBOXYLIC ACID CYCLE</scope>
    <source>
        <strain>ATCC 25618 / H37Rv</strain>
    </source>
</reference>
<reference key="3">
    <citation type="journal article" date="2011" name="Mol. Cell. Proteomics">
        <title>Proteogenomic analysis of Mycobacterium tuberculosis by high resolution mass spectrometry.</title>
        <authorList>
            <person name="Kelkar D.S."/>
            <person name="Kumar D."/>
            <person name="Kumar P."/>
            <person name="Balakrishnan L."/>
            <person name="Muthusamy B."/>
            <person name="Yadav A.K."/>
            <person name="Shrivastava P."/>
            <person name="Marimuthu A."/>
            <person name="Anand S."/>
            <person name="Sundaram H."/>
            <person name="Kingsbury R."/>
            <person name="Harsha H.C."/>
            <person name="Nair B."/>
            <person name="Prasad T.S."/>
            <person name="Chauhan D.S."/>
            <person name="Katoch K."/>
            <person name="Katoch V.M."/>
            <person name="Kumar P."/>
            <person name="Chaerkady R."/>
            <person name="Ramachandran S."/>
            <person name="Dash D."/>
            <person name="Pandey A."/>
        </authorList>
    </citation>
    <scope>IDENTIFICATION BY MASS SPECTROMETRY [LARGE SCALE ANALYSIS]</scope>
    <source>
        <strain>ATCC 25618 / H37Rv</strain>
    </source>
</reference>
<sequence>MPIATINPATGETVKTFTAATDDEVDAAIARAHRRFADYRQTSFAQRARWANATADLLEAEADQAAAMMTLEMGKTLAAAKAEALKCAKGFRYYAENAEALLADEPADAAKVGASAAYGRYQPLGVILAVMPWNFPLWQAVRFAAPALMAGNVGLLKHASNVPQCALYLADVIARGGFPDGCFQTLLVSSGAVEAILRDPRVAAATLTGSEPAGQSVGAIAGNEIKPTVLELGGSDPFIVMPSADLDAAVSTAVTGRVQNNGQSCIAAKRFIVHADIYDDFVDKFVARMAALRVGDPTDPDTDVGPLATEQGRNEVAKQVEDAAAAGAVIRCGGKRLDRPGWFYPPTVITDISKDMALYTEEVFGPVASVFRAANIDEAVEIANATTFGLGSNAWTRDETEQRRFIDDIVAGQVFINGMTVSYPELPFGGVKRSGYGRELSAHGIREFCNIKTVWIA</sequence>
<dbReference type="EC" id="1.2.1.79"/>
<dbReference type="EMBL" id="AL123456">
    <property type="protein sequence ID" value="CCP42962.1"/>
    <property type="status" value="ALT_INIT"/>
    <property type="molecule type" value="Genomic_DNA"/>
</dbReference>
<dbReference type="PIR" id="F70687">
    <property type="entry name" value="F70687"/>
</dbReference>
<dbReference type="RefSeq" id="NP_216247.2">
    <property type="nucleotide sequence ID" value="NC_000962.3"/>
</dbReference>
<dbReference type="RefSeq" id="WP_003401276.1">
    <property type="nucleotide sequence ID" value="NC_000962.3"/>
</dbReference>
<dbReference type="RefSeq" id="WP_003912534.1">
    <property type="nucleotide sequence ID" value="NZ_NVQJ01000001.1"/>
</dbReference>
<dbReference type="SMR" id="P9WNX9"/>
<dbReference type="FunCoup" id="P9WNX9">
    <property type="interactions" value="61"/>
</dbReference>
<dbReference type="STRING" id="83332.Rv0234c"/>
<dbReference type="PaxDb" id="83332-Rv0234c"/>
<dbReference type="DNASU" id="886732"/>
<dbReference type="GeneID" id="886732"/>
<dbReference type="KEGG" id="mtu:Rv0234c"/>
<dbReference type="PATRIC" id="fig|83332.12.peg.263"/>
<dbReference type="TubercuList" id="Rv0234c"/>
<dbReference type="eggNOG" id="COG1012">
    <property type="taxonomic scope" value="Bacteria"/>
</dbReference>
<dbReference type="InParanoid" id="P9WNX9"/>
<dbReference type="OrthoDB" id="6882680at2"/>
<dbReference type="BioCyc" id="MetaCyc:G185E-4354-MONOMER"/>
<dbReference type="BRENDA" id="1.2.1.79">
    <property type="organism ID" value="3445"/>
</dbReference>
<dbReference type="SABIO-RK" id="P9WNX9"/>
<dbReference type="Proteomes" id="UP000001584">
    <property type="component" value="Chromosome"/>
</dbReference>
<dbReference type="GO" id="GO:0005886">
    <property type="term" value="C:plasma membrane"/>
    <property type="evidence" value="ECO:0007005"/>
    <property type="project" value="MTBBASE"/>
</dbReference>
<dbReference type="GO" id="GO:0004030">
    <property type="term" value="F:aldehyde dehydrogenase [NAD(P)+] activity"/>
    <property type="evidence" value="ECO:0007669"/>
    <property type="project" value="InterPro"/>
</dbReference>
<dbReference type="GO" id="GO:0004777">
    <property type="term" value="F:succinate-semialdehyde dehydrogenase (NAD+) activity"/>
    <property type="evidence" value="ECO:0000318"/>
    <property type="project" value="GO_Central"/>
</dbReference>
<dbReference type="GO" id="GO:0036243">
    <property type="term" value="F:succinate-semialdehyde dehydrogenase (NADP+) activity"/>
    <property type="evidence" value="ECO:0007669"/>
    <property type="project" value="UniProtKB-EC"/>
</dbReference>
<dbReference type="GO" id="GO:0009013">
    <property type="term" value="F:succinate-semialdehyde dehydrogenase [NAD(P)+] activity"/>
    <property type="evidence" value="ECO:0000314"/>
    <property type="project" value="MTBBASE"/>
</dbReference>
<dbReference type="GO" id="GO:0006099">
    <property type="term" value="P:tricarboxylic acid cycle"/>
    <property type="evidence" value="ECO:0000314"/>
    <property type="project" value="MTBBASE"/>
</dbReference>
<dbReference type="CDD" id="cd07100">
    <property type="entry name" value="ALDH_SSADH1_GabD1"/>
    <property type="match status" value="1"/>
</dbReference>
<dbReference type="FunFam" id="3.40.309.10:FF:000010">
    <property type="entry name" value="Gamma-aminobutyraldehyde dehydrogenase"/>
    <property type="match status" value="1"/>
</dbReference>
<dbReference type="FunFam" id="3.40.605.10:FF:000012">
    <property type="entry name" value="NAD-dependent succinate-semialdehyde dehydrogenase"/>
    <property type="match status" value="1"/>
</dbReference>
<dbReference type="Gene3D" id="3.40.605.10">
    <property type="entry name" value="Aldehyde Dehydrogenase, Chain A, domain 1"/>
    <property type="match status" value="1"/>
</dbReference>
<dbReference type="Gene3D" id="3.40.309.10">
    <property type="entry name" value="Aldehyde Dehydrogenase, Chain A, domain 2"/>
    <property type="match status" value="1"/>
</dbReference>
<dbReference type="InterPro" id="IPR016161">
    <property type="entry name" value="Ald_DH/histidinol_DH"/>
</dbReference>
<dbReference type="InterPro" id="IPR016163">
    <property type="entry name" value="Ald_DH_C"/>
</dbReference>
<dbReference type="InterPro" id="IPR016160">
    <property type="entry name" value="Ald_DH_CS_CYS"/>
</dbReference>
<dbReference type="InterPro" id="IPR016162">
    <property type="entry name" value="Ald_DH_N"/>
</dbReference>
<dbReference type="InterPro" id="IPR015590">
    <property type="entry name" value="Aldehyde_DH_dom"/>
</dbReference>
<dbReference type="InterPro" id="IPR044148">
    <property type="entry name" value="ALDH_GabD1-like"/>
</dbReference>
<dbReference type="InterPro" id="IPR047110">
    <property type="entry name" value="GABD/Sad-like"/>
</dbReference>
<dbReference type="NCBIfam" id="NF006915">
    <property type="entry name" value="PRK09406.1"/>
    <property type="match status" value="1"/>
</dbReference>
<dbReference type="PANTHER" id="PTHR43217">
    <property type="entry name" value="SUCCINATE SEMIALDEHYDE DEHYDROGENASE [NAD(P)+] SAD"/>
    <property type="match status" value="1"/>
</dbReference>
<dbReference type="PANTHER" id="PTHR43217:SF1">
    <property type="entry name" value="SUCCINATE SEMIALDEHYDE DEHYDROGENASE [NAD(P)+] SAD"/>
    <property type="match status" value="1"/>
</dbReference>
<dbReference type="Pfam" id="PF00171">
    <property type="entry name" value="Aldedh"/>
    <property type="match status" value="1"/>
</dbReference>
<dbReference type="SUPFAM" id="SSF53720">
    <property type="entry name" value="ALDH-like"/>
    <property type="match status" value="1"/>
</dbReference>
<dbReference type="PROSITE" id="PS00070">
    <property type="entry name" value="ALDEHYDE_DEHYDR_CYS"/>
    <property type="match status" value="1"/>
</dbReference>
<gene>
    <name type="primary">gabD1</name>
    <name type="ordered locus">Rv0234c</name>
</gene>
<name>GABD1_MYCTU</name>